<gene>
    <name evidence="1" type="primary">lysS1</name>
    <name type="synonym">lysK</name>
    <name type="ordered locus">MA_0534</name>
</gene>
<organism>
    <name type="scientific">Methanosarcina acetivorans (strain ATCC 35395 / DSM 2834 / JCM 12185 / C2A)</name>
    <dbReference type="NCBI Taxonomy" id="188937"/>
    <lineage>
        <taxon>Archaea</taxon>
        <taxon>Methanobacteriati</taxon>
        <taxon>Methanobacteriota</taxon>
        <taxon>Stenosarchaea group</taxon>
        <taxon>Methanomicrobia</taxon>
        <taxon>Methanosarcinales</taxon>
        <taxon>Methanosarcinaceae</taxon>
        <taxon>Methanosarcina</taxon>
    </lineage>
</organism>
<comment type="catalytic activity">
    <reaction evidence="1">
        <text>tRNA(Lys) + L-lysine + ATP = L-lysyl-tRNA(Lys) + AMP + diphosphate</text>
        <dbReference type="Rhea" id="RHEA:20792"/>
        <dbReference type="Rhea" id="RHEA-COMP:9696"/>
        <dbReference type="Rhea" id="RHEA-COMP:9697"/>
        <dbReference type="ChEBI" id="CHEBI:30616"/>
        <dbReference type="ChEBI" id="CHEBI:32551"/>
        <dbReference type="ChEBI" id="CHEBI:33019"/>
        <dbReference type="ChEBI" id="CHEBI:78442"/>
        <dbReference type="ChEBI" id="CHEBI:78529"/>
        <dbReference type="ChEBI" id="CHEBI:456215"/>
        <dbReference type="EC" id="6.1.1.6"/>
    </reaction>
</comment>
<comment type="subcellular location">
    <subcellularLocation>
        <location evidence="1">Cytoplasm</location>
    </subcellularLocation>
</comment>
<comment type="similarity">
    <text evidence="1">Belongs to the class-I aminoacyl-tRNA synthetase family.</text>
</comment>
<dbReference type="EC" id="6.1.1.6" evidence="1"/>
<dbReference type="EMBL" id="AE010299">
    <property type="protein sequence ID" value="AAM03978.1"/>
    <property type="molecule type" value="Genomic_DNA"/>
</dbReference>
<dbReference type="SMR" id="Q8TTA3"/>
<dbReference type="FunCoup" id="Q8TTA3">
    <property type="interactions" value="22"/>
</dbReference>
<dbReference type="STRING" id="188937.MA_0534"/>
<dbReference type="EnsemblBacteria" id="AAM03978">
    <property type="protein sequence ID" value="AAM03978"/>
    <property type="gene ID" value="MA_0534"/>
</dbReference>
<dbReference type="KEGG" id="mac:MA_0534"/>
<dbReference type="HOGENOM" id="CLU_025562_1_0_2"/>
<dbReference type="InParanoid" id="Q8TTA3"/>
<dbReference type="PhylomeDB" id="Q8TTA3"/>
<dbReference type="Proteomes" id="UP000002487">
    <property type="component" value="Chromosome"/>
</dbReference>
<dbReference type="GO" id="GO:0005737">
    <property type="term" value="C:cytoplasm"/>
    <property type="evidence" value="ECO:0007669"/>
    <property type="project" value="UniProtKB-SubCell"/>
</dbReference>
<dbReference type="GO" id="GO:0005524">
    <property type="term" value="F:ATP binding"/>
    <property type="evidence" value="ECO:0007669"/>
    <property type="project" value="UniProtKB-UniRule"/>
</dbReference>
<dbReference type="GO" id="GO:0004824">
    <property type="term" value="F:lysine-tRNA ligase activity"/>
    <property type="evidence" value="ECO:0007669"/>
    <property type="project" value="UniProtKB-UniRule"/>
</dbReference>
<dbReference type="GO" id="GO:0000049">
    <property type="term" value="F:tRNA binding"/>
    <property type="evidence" value="ECO:0007669"/>
    <property type="project" value="InterPro"/>
</dbReference>
<dbReference type="GO" id="GO:0006430">
    <property type="term" value="P:lysyl-tRNA aminoacylation"/>
    <property type="evidence" value="ECO:0007669"/>
    <property type="project" value="UniProtKB-UniRule"/>
</dbReference>
<dbReference type="CDD" id="cd00674">
    <property type="entry name" value="LysRS_core_class_I"/>
    <property type="match status" value="1"/>
</dbReference>
<dbReference type="Gene3D" id="1.10.10.350">
    <property type="match status" value="1"/>
</dbReference>
<dbReference type="Gene3D" id="1.10.10.770">
    <property type="match status" value="1"/>
</dbReference>
<dbReference type="Gene3D" id="3.40.50.620">
    <property type="entry name" value="HUPs"/>
    <property type="match status" value="2"/>
</dbReference>
<dbReference type="Gene3D" id="6.10.20.10">
    <property type="entry name" value="Lysine tRNA ligase, stem contact fold domain"/>
    <property type="match status" value="1"/>
</dbReference>
<dbReference type="HAMAP" id="MF_00177">
    <property type="entry name" value="Lys_tRNA_synth_class1"/>
    <property type="match status" value="1"/>
</dbReference>
<dbReference type="InterPro" id="IPR020751">
    <property type="entry name" value="aa-tRNA-synth_I_codon-bd_sub2"/>
</dbReference>
<dbReference type="InterPro" id="IPR001412">
    <property type="entry name" value="aa-tRNA-synth_I_CS"/>
</dbReference>
<dbReference type="InterPro" id="IPR008925">
    <property type="entry name" value="aa_tRNA-synth_I_cd-bd_sf"/>
</dbReference>
<dbReference type="InterPro" id="IPR002904">
    <property type="entry name" value="Lys-tRNA-ligase"/>
</dbReference>
<dbReference type="InterPro" id="IPR042078">
    <property type="entry name" value="Lys-tRNA-ligase_SC_fold"/>
</dbReference>
<dbReference type="InterPro" id="IPR014729">
    <property type="entry name" value="Rossmann-like_a/b/a_fold"/>
</dbReference>
<dbReference type="NCBIfam" id="TIGR00467">
    <property type="entry name" value="lysS_arch"/>
    <property type="match status" value="1"/>
</dbReference>
<dbReference type="PANTHER" id="PTHR37940">
    <property type="entry name" value="LYSINE--TRNA LIGASE"/>
    <property type="match status" value="1"/>
</dbReference>
<dbReference type="PANTHER" id="PTHR37940:SF1">
    <property type="entry name" value="LYSINE--TRNA LIGASE"/>
    <property type="match status" value="1"/>
</dbReference>
<dbReference type="Pfam" id="PF01921">
    <property type="entry name" value="tRNA-synt_1f"/>
    <property type="match status" value="1"/>
</dbReference>
<dbReference type="SUPFAM" id="SSF48163">
    <property type="entry name" value="An anticodon-binding domain of class I aminoacyl-tRNA synthetases"/>
    <property type="match status" value="1"/>
</dbReference>
<dbReference type="SUPFAM" id="SSF52374">
    <property type="entry name" value="Nucleotidylyl transferase"/>
    <property type="match status" value="1"/>
</dbReference>
<dbReference type="PROSITE" id="PS00178">
    <property type="entry name" value="AA_TRNA_LIGASE_I"/>
    <property type="match status" value="1"/>
</dbReference>
<evidence type="ECO:0000255" key="1">
    <source>
        <dbReference type="HAMAP-Rule" id="MF_00177"/>
    </source>
</evidence>
<accession>Q8TTA3</accession>
<sequence>MHWADVIAEDVLNKSGKHLVATGITPSGHIHIGNMREVVTADAAYRALLDMGADARLIYIADNYDPLRKVYPFLPESYAEHVGKPISEVPCPCGDCANYAEHFLKPFIEALRRLGINPEVLRADEMYRAGLYTEAIKTALAKRDEIAKILEEVSGKTVAEDWSPFNPRCNECGKITTTKVAGFDLEAETVDYVCACGHSGTVPMAGGGKLTWRVDWPARWAVLGVTVEPFGKDHASKGGSYDTGKRIVREIYGHEPPFPIVYEWIMLGKRGAMSSSTGVVVSISDMLEVVPPEVLRYLIIRTKPEKHIQFDPGQPLLNLVDEYERLRDKFRENDPSLGDFEKRIYELSRATGICHPEIPFKQMVTIYQVARGDFEQVLKIVKRSGFSTENEKCIRELADNVSRWLELYAPPFAKFSVKEKVPVQTATLSELQKAFLGAFADLIETKGKISGEEYHMLVYSAKDEGSELNRLIAQKVNVPVPQVDPKDLFKAIYTSILGQSSGPKAGWFLSSFEKGFLITRFREASTYNPEKSS</sequence>
<reference key="1">
    <citation type="journal article" date="2002" name="Genome Res.">
        <title>The genome of Methanosarcina acetivorans reveals extensive metabolic and physiological diversity.</title>
        <authorList>
            <person name="Galagan J.E."/>
            <person name="Nusbaum C."/>
            <person name="Roy A."/>
            <person name="Endrizzi M.G."/>
            <person name="Macdonald P."/>
            <person name="FitzHugh W."/>
            <person name="Calvo S."/>
            <person name="Engels R."/>
            <person name="Smirnov S."/>
            <person name="Atnoor D."/>
            <person name="Brown A."/>
            <person name="Allen N."/>
            <person name="Naylor J."/>
            <person name="Stange-Thomann N."/>
            <person name="DeArellano K."/>
            <person name="Johnson R."/>
            <person name="Linton L."/>
            <person name="McEwan P."/>
            <person name="McKernan K."/>
            <person name="Talamas J."/>
            <person name="Tirrell A."/>
            <person name="Ye W."/>
            <person name="Zimmer A."/>
            <person name="Barber R.D."/>
            <person name="Cann I."/>
            <person name="Graham D.E."/>
            <person name="Grahame D.A."/>
            <person name="Guss A.M."/>
            <person name="Hedderich R."/>
            <person name="Ingram-Smith C."/>
            <person name="Kuettner H.C."/>
            <person name="Krzycki J.A."/>
            <person name="Leigh J.A."/>
            <person name="Li W."/>
            <person name="Liu J."/>
            <person name="Mukhopadhyay B."/>
            <person name="Reeve J.N."/>
            <person name="Smith K."/>
            <person name="Springer T.A."/>
            <person name="Umayam L.A."/>
            <person name="White O."/>
            <person name="White R.H."/>
            <person name="de Macario E.C."/>
            <person name="Ferry J.G."/>
            <person name="Jarrell K.F."/>
            <person name="Jing H."/>
            <person name="Macario A.J.L."/>
            <person name="Paulsen I.T."/>
            <person name="Pritchett M."/>
            <person name="Sowers K.R."/>
            <person name="Swanson R.V."/>
            <person name="Zinder S.H."/>
            <person name="Lander E."/>
            <person name="Metcalf W.W."/>
            <person name="Birren B."/>
        </authorList>
    </citation>
    <scope>NUCLEOTIDE SEQUENCE [LARGE SCALE GENOMIC DNA]</scope>
    <source>
        <strain>ATCC 35395 / DSM 2834 / JCM 12185 / C2A</strain>
    </source>
</reference>
<keyword id="KW-0030">Aminoacyl-tRNA synthetase</keyword>
<keyword id="KW-0067">ATP-binding</keyword>
<keyword id="KW-0963">Cytoplasm</keyword>
<keyword id="KW-0436">Ligase</keyword>
<keyword id="KW-0547">Nucleotide-binding</keyword>
<keyword id="KW-0648">Protein biosynthesis</keyword>
<keyword id="KW-1185">Reference proteome</keyword>
<proteinExistence type="inferred from homology"/>
<name>SYK1_METAC</name>
<protein>
    <recommendedName>
        <fullName evidence="1">Lysine--tRNA ligase 1</fullName>
        <ecNumber evidence="1">6.1.1.6</ecNumber>
    </recommendedName>
    <alternativeName>
        <fullName evidence="1">Lysyl-tRNA synthetase 1</fullName>
        <shortName evidence="1">LysRS 1</shortName>
    </alternativeName>
</protein>
<feature type="chain" id="PRO_0000152751" description="Lysine--tRNA ligase 1">
    <location>
        <begin position="1"/>
        <end position="533"/>
    </location>
</feature>
<feature type="short sequence motif" description="'HIGH' region">
    <location>
        <begin position="26"/>
        <end position="34"/>
    </location>
</feature>
<feature type="short sequence motif" description="'KMSKS' region">
    <location>
        <begin position="272"/>
        <end position="276"/>
    </location>
</feature>